<dbReference type="EMBL" id="AF226277">
    <property type="protein sequence ID" value="AAF32406.1"/>
    <property type="molecule type" value="Genomic_DNA"/>
</dbReference>
<dbReference type="EMBL" id="AL123456">
    <property type="protein sequence ID" value="CCP43788.1"/>
    <property type="molecule type" value="Genomic_DNA"/>
</dbReference>
<dbReference type="PIR" id="D70560">
    <property type="entry name" value="D70560"/>
</dbReference>
<dbReference type="RefSeq" id="NP_215553.1">
    <property type="nucleotide sequence ID" value="NC_000962.3"/>
</dbReference>
<dbReference type="SMR" id="P0DOA6"/>
<dbReference type="STRING" id="83332.Rv1037c"/>
<dbReference type="PaxDb" id="83332-Rv1037c"/>
<dbReference type="DNASU" id="888299"/>
<dbReference type="GeneID" id="888299"/>
<dbReference type="KEGG" id="mtu:Rv1037c"/>
<dbReference type="KEGG" id="mtu:Rv3619c"/>
<dbReference type="KEGG" id="mtv:RVBD_1037c"/>
<dbReference type="KEGG" id="mtv:RVBD_3619c"/>
<dbReference type="TubercuList" id="Rv1037c"/>
<dbReference type="eggNOG" id="ENOG5032I3T">
    <property type="taxonomic scope" value="Bacteria"/>
</dbReference>
<dbReference type="InParanoid" id="P0DOA6"/>
<dbReference type="OrthoDB" id="4625013at2"/>
<dbReference type="PhylomeDB" id="P0DOA6"/>
<dbReference type="Proteomes" id="UP000001584">
    <property type="component" value="Chromosome"/>
</dbReference>
<dbReference type="GO" id="GO:0005576">
    <property type="term" value="C:extracellular region"/>
    <property type="evidence" value="ECO:0007669"/>
    <property type="project" value="UniProtKB-SubCell"/>
</dbReference>
<dbReference type="GO" id="GO:0009274">
    <property type="term" value="C:peptidoglycan-based cell wall"/>
    <property type="evidence" value="ECO:0000314"/>
    <property type="project" value="UniProtKB"/>
</dbReference>
<dbReference type="FunFam" id="1.10.287.1060:FF:000004">
    <property type="entry name" value="ESAT-6-like protein EsxI"/>
    <property type="match status" value="1"/>
</dbReference>
<dbReference type="Gene3D" id="1.10.287.1060">
    <property type="entry name" value="ESAT-6-like"/>
    <property type="match status" value="1"/>
</dbReference>
<dbReference type="InterPro" id="IPR009416">
    <property type="entry name" value="ESAT-6-like_Myco"/>
</dbReference>
<dbReference type="InterPro" id="IPR036689">
    <property type="entry name" value="ESAT-6-like_sf"/>
</dbReference>
<dbReference type="InterPro" id="IPR010310">
    <property type="entry name" value="T7SS_ESAT-6-like"/>
</dbReference>
<dbReference type="Pfam" id="PF06013">
    <property type="entry name" value="WXG100"/>
    <property type="match status" value="1"/>
</dbReference>
<dbReference type="PIRSF" id="PIRSF037656">
    <property type="entry name" value="DUF1066"/>
    <property type="match status" value="1"/>
</dbReference>
<dbReference type="SUPFAM" id="SSF140453">
    <property type="entry name" value="EsxAB dimer-like"/>
    <property type="match status" value="1"/>
</dbReference>
<organism>
    <name type="scientific">Mycobacterium tuberculosis (strain ATCC 25618 / H37Rv)</name>
    <dbReference type="NCBI Taxonomy" id="83332"/>
    <lineage>
        <taxon>Bacteria</taxon>
        <taxon>Bacillati</taxon>
        <taxon>Actinomycetota</taxon>
        <taxon>Actinomycetes</taxon>
        <taxon>Mycobacteriales</taxon>
        <taxon>Mycobacteriaceae</taxon>
        <taxon>Mycobacterium</taxon>
        <taxon>Mycobacterium tuberculosis complex</taxon>
    </lineage>
</organism>
<proteinExistence type="evidence at transcript level"/>
<sequence length="94" mass="9833">MTINYQFGDVDAHGAMIRAQAGSLEAEHQAIISDVLTASDFWGGAGSAACQGFITQLGRNFQVIYEQANAHGQKVQAAGNNMAQTDSAVGSSWA</sequence>
<evidence type="ECO:0000269" key="1">
    <source>
    </source>
</evidence>
<evidence type="ECO:0000303" key="2">
    <source>
    </source>
</evidence>
<evidence type="ECO:0000305" key="3"/>
<evidence type="ECO:0000305" key="4">
    <source>
    </source>
</evidence>
<reference key="1">
    <citation type="journal article" date="2000" name="J. Exp. Med.">
        <title>Expression cloning of an immunodominant family of Mycobacterium tuberculosis antigens using human CD4(+) T cells.</title>
        <authorList>
            <person name="Alderson M.R."/>
            <person name="Bement T."/>
            <person name="Day C.H."/>
            <person name="Zhu L."/>
            <person name="Molesh D."/>
            <person name="Skeiky Y.A.W."/>
            <person name="Coler R."/>
            <person name="Lewinsohn D.M."/>
            <person name="Reed S.G."/>
            <person name="Dillon D.C."/>
        </authorList>
    </citation>
    <scope>NUCLEOTIDE SEQUENCE [GENOMIC DNA]</scope>
    <source>
        <strain>ATCC 35801 / TMC 107 / Erdman</strain>
    </source>
</reference>
<reference key="2">
    <citation type="journal article" date="1998" name="Nature">
        <title>Deciphering the biology of Mycobacterium tuberculosis from the complete genome sequence.</title>
        <authorList>
            <person name="Cole S.T."/>
            <person name="Brosch R."/>
            <person name="Parkhill J."/>
            <person name="Garnier T."/>
            <person name="Churcher C.M."/>
            <person name="Harris D.E."/>
            <person name="Gordon S.V."/>
            <person name="Eiglmeier K."/>
            <person name="Gas S."/>
            <person name="Barry C.E. III"/>
            <person name="Tekaia F."/>
            <person name="Badcock K."/>
            <person name="Basham D."/>
            <person name="Brown D."/>
            <person name="Chillingworth T."/>
            <person name="Connor R."/>
            <person name="Davies R.M."/>
            <person name="Devlin K."/>
            <person name="Feltwell T."/>
            <person name="Gentles S."/>
            <person name="Hamlin N."/>
            <person name="Holroyd S."/>
            <person name="Hornsby T."/>
            <person name="Jagels K."/>
            <person name="Krogh A."/>
            <person name="McLean J."/>
            <person name="Moule S."/>
            <person name="Murphy L.D."/>
            <person name="Oliver S."/>
            <person name="Osborne J."/>
            <person name="Quail M.A."/>
            <person name="Rajandream M.A."/>
            <person name="Rogers J."/>
            <person name="Rutter S."/>
            <person name="Seeger K."/>
            <person name="Skelton S."/>
            <person name="Squares S."/>
            <person name="Squares R."/>
            <person name="Sulston J.E."/>
            <person name="Taylor K."/>
            <person name="Whitehead S."/>
            <person name="Barrell B.G."/>
        </authorList>
    </citation>
    <scope>NUCLEOTIDE SEQUENCE [LARGE SCALE GENOMIC DNA]</scope>
    <source>
        <strain>ATCC 25618 / H37Rv</strain>
    </source>
</reference>
<reference key="3">
    <citation type="journal article" date="2009" name="PLoS Pathog.">
        <title>Systematic genetic nomenclature for type VII secretion systems.</title>
        <authorList>
            <person name="Bitter W."/>
            <person name="Houben E.N."/>
            <person name="Bottai D."/>
            <person name="Brodin P."/>
            <person name="Brown E.J."/>
            <person name="Cox J.S."/>
            <person name="Derbyshire K."/>
            <person name="Fortune S.M."/>
            <person name="Gao L.Y."/>
            <person name="Liu J."/>
            <person name="Gey van Pittius N.C."/>
            <person name="Pym A.S."/>
            <person name="Rubin E.J."/>
            <person name="Sherman D.R."/>
            <person name="Cole S.T."/>
            <person name="Brosch R."/>
        </authorList>
    </citation>
    <scope>NOMENCLATURE</scope>
</reference>
<reference key="4">
    <citation type="journal article" date="2011" name="Front. Microbiol.">
        <title>Mycobacterium tuberculosis RNA expression patterns in sputum bacteria indicate secreted Esx factors contributing to growth are highly expressed in active disease.</title>
        <authorList>
            <person name="Bukka A."/>
            <person name="Price C.T."/>
            <person name="Kernodle D.S."/>
            <person name="Graham J.E."/>
        </authorList>
    </citation>
    <scope>INDUCTION</scope>
    <scope>DISRUPTION PHENOTYPE</scope>
    <source>
        <strain>ATCC 25618 / H37Rv</strain>
    </source>
</reference>
<accession>P0DOA6</accession>
<accession>L0TEQ6</accession>
<accession>O08120</accession>
<accession>O08122</accession>
<accession>P96364</accession>
<accession>P9WNK1</accession>
<accession>Q9L781</accession>
<gene>
    <name evidence="2" type="primary">esxI</name>
    <name type="ordered locus">Rv1037c</name>
    <name type="ORF">MTCY10G2.12</name>
</gene>
<keyword id="KW-1185">Reference proteome</keyword>
<keyword id="KW-0964">Secreted</keyword>
<name>ESXI_MYCTU</name>
<comment type="subcellular location">
    <subcellularLocation>
        <location evidence="4">Secreted</location>
    </subcellularLocation>
    <text evidence="4">Probably secreted via the ESX-5 / type VII secretion system (T7SS).</text>
</comment>
<comment type="induction">
    <text evidence="1">Differentially expressed under different growth conditions.</text>
</comment>
<comment type="disruption phenotype">
    <text evidence="1">EsxJI deletion mutant shows extremely slow growth in broth cultures.</text>
</comment>
<comment type="similarity">
    <text evidence="4">Belongs to the WXG100 family. ESAT-6 subfamily.</text>
</comment>
<feature type="chain" id="PRO_0000167800" description="ESAT-6-like protein EsxI">
    <location>
        <begin position="1"/>
        <end position="94"/>
    </location>
</feature>
<feature type="sequence conflict" description="In Ref. 1; AAF32406." evidence="3" ref="1">
    <original>Q</original>
    <variation>L</variation>
    <location>
        <position position="20"/>
    </location>
</feature>
<feature type="sequence conflict" description="In Ref. 1; AAF32406." evidence="3" ref="1">
    <original>S</original>
    <variation>L</variation>
    <location>
        <position position="23"/>
    </location>
</feature>
<protein>
    <recommendedName>
        <fullName evidence="3">ESAT-6-like protein EsxI</fullName>
    </recommendedName>
    <alternativeName>
        <fullName>Antigen Mtb9.9B</fullName>
    </alternativeName>
</protein>